<protein>
    <recommendedName>
        <fullName>Phospholipase D1</fullName>
        <shortName>PLD 1</shortName>
        <ecNumber>3.1.4.4</ecNumber>
    </recommendedName>
    <alternativeName>
        <fullName>Choline phosphatase 1</fullName>
    </alternativeName>
    <alternativeName>
        <fullName>Phosphatidylcholine-hydrolyzing phospholipase D1</fullName>
    </alternativeName>
</protein>
<name>PLD1_SCHPO</name>
<gene>
    <name type="primary">pld1</name>
    <name type="ORF">SPAC2F7.16c</name>
</gene>
<sequence>MTIHQGGNSVIDNVPYSLNTNVNDSIYSEKGTGRKDAEDHTPSKITDLEKNVDHSIPSFPENDPKNYSEFVNLNPPKRPDLEHTRGSSWHTASENVNDLAANDSTRVQTPEFITQTMEDENVEVPPLERDERDAAAAHTSKANRNSARQMWAQLMASVRKFKREDEKPILKENLPAINLFEAGIPASLPIAKHFIRDKSGQPVLPIITDLIKVSVLDVEPKHNRIHSTFTIQVEYGTGPHAIRWLIYRQLRDFINLHSHFLFFEFQHRFSGRRMKLPKFPKEVLPYLVKLRGYQKILYSNPSDQLIDETHSISDISWESHSQDGDRTTGQPRHANNGRKKHGNFWTIQGNTLGVYLQEMIHNLQFFPEVNVLYSFLEFSSLGLYLAGAGTFHGKEGFATLKRNYSPTQYMLCCNTTMMKTRSQPFWIIVSESCIILCDNMLSMQPADVFIWDVDFEITRKNFRKAHSKDTNEKIRLSHHSFKIKNRQKVMKLSVRSGRWLQQFINSVQVAQGLTAWCEIHRFDSFAPVRTNVAVQWMVDARDHMWNVSRAIKNAKRCIMIHGWWLSPELQMRRPYSMAHKWRIDRILNEKAHEGVMVYIMIYRNIDATIPIDSFHTKEHLQSLHPNIYVIRSPSHFRQNALFWAHHEKLVVVDDAITFIGGIDLCFGRYDTPQHILYDDKPVADKTGLCEQTWRGKDYSNARVHDFFDLTEPYKDMYDRLAVPRMGWHDVSMCIIGQPARDAARHFVQRWNYLIQCKKPARKTPLLIPPPDFTTDQLTDSQLTGTCEVQVLRSAGLWSLGLVDTVEQSIQNAYVTCIEKSEHFIYIENQFFVTSTTCEGTTIENRVGDALVERIIRAHKNNEKWRGVIMIPLLPGFEGQIDLQEGGSLRLIVECQYRSICHGEHSIFGRLNAKGIDGSKYLRFYGLRGWAHLGENHELVTEMIYVHAKILIADDRVAVIGSANINERSLLGNRDSEIAAVIRDTLTIDSKMDGKPYKVGKFAHTLRKRLMREHLGLETDVLEQREYNMDGLDRDTEWKRVEVWTPDEGNAINGSAYTAEELKMKYRSQSQFTTTPDILRKAEKSMKKLDQRVSLIPSSIEFNIKTQKDKVEFEKNYEKSKKGPDVIANALVGGIPLSLKTKEDSLYELSKFSQCGEDQRPMVLKDPDHLVPEPSRPHCGNGLVFYDDIPLLEVNPISGETIPKFDASSFEDPVCDEFFEDIWSKVASNNTTIYRHIFRCVPDDEMLTWESYNEWKKYGKRFKEEQARWRQEELSNLHETHEKSENDPKNPKAGSQGSGNTSASEDSKTEKPKTRTNNGLQVPDKRVVYDLLRGIRGQLVELPLKWMSTESNARNWLSSIDKIPPLEIYD</sequence>
<reference key="1">
    <citation type="journal article" date="2002" name="Nature">
        <title>The genome sequence of Schizosaccharomyces pombe.</title>
        <authorList>
            <person name="Wood V."/>
            <person name="Gwilliam R."/>
            <person name="Rajandream M.A."/>
            <person name="Lyne M.H."/>
            <person name="Lyne R."/>
            <person name="Stewart A."/>
            <person name="Sgouros J.G."/>
            <person name="Peat N."/>
            <person name="Hayles J."/>
            <person name="Baker S.G."/>
            <person name="Basham D."/>
            <person name="Bowman S."/>
            <person name="Brooks K."/>
            <person name="Brown D."/>
            <person name="Brown S."/>
            <person name="Chillingworth T."/>
            <person name="Churcher C.M."/>
            <person name="Collins M."/>
            <person name="Connor R."/>
            <person name="Cronin A."/>
            <person name="Davis P."/>
            <person name="Feltwell T."/>
            <person name="Fraser A."/>
            <person name="Gentles S."/>
            <person name="Goble A."/>
            <person name="Hamlin N."/>
            <person name="Harris D.E."/>
            <person name="Hidalgo J."/>
            <person name="Hodgson G."/>
            <person name="Holroyd S."/>
            <person name="Hornsby T."/>
            <person name="Howarth S."/>
            <person name="Huckle E.J."/>
            <person name="Hunt S."/>
            <person name="Jagels K."/>
            <person name="James K.D."/>
            <person name="Jones L."/>
            <person name="Jones M."/>
            <person name="Leather S."/>
            <person name="McDonald S."/>
            <person name="McLean J."/>
            <person name="Mooney P."/>
            <person name="Moule S."/>
            <person name="Mungall K.L."/>
            <person name="Murphy L.D."/>
            <person name="Niblett D."/>
            <person name="Odell C."/>
            <person name="Oliver K."/>
            <person name="O'Neil S."/>
            <person name="Pearson D."/>
            <person name="Quail M.A."/>
            <person name="Rabbinowitsch E."/>
            <person name="Rutherford K.M."/>
            <person name="Rutter S."/>
            <person name="Saunders D."/>
            <person name="Seeger K."/>
            <person name="Sharp S."/>
            <person name="Skelton J."/>
            <person name="Simmonds M.N."/>
            <person name="Squares R."/>
            <person name="Squares S."/>
            <person name="Stevens K."/>
            <person name="Taylor K."/>
            <person name="Taylor R.G."/>
            <person name="Tivey A."/>
            <person name="Walsh S.V."/>
            <person name="Warren T."/>
            <person name="Whitehead S."/>
            <person name="Woodward J.R."/>
            <person name="Volckaert G."/>
            <person name="Aert R."/>
            <person name="Robben J."/>
            <person name="Grymonprez B."/>
            <person name="Weltjens I."/>
            <person name="Vanstreels E."/>
            <person name="Rieger M."/>
            <person name="Schaefer M."/>
            <person name="Mueller-Auer S."/>
            <person name="Gabel C."/>
            <person name="Fuchs M."/>
            <person name="Duesterhoeft A."/>
            <person name="Fritzc C."/>
            <person name="Holzer E."/>
            <person name="Moestl D."/>
            <person name="Hilbert H."/>
            <person name="Borzym K."/>
            <person name="Langer I."/>
            <person name="Beck A."/>
            <person name="Lehrach H."/>
            <person name="Reinhardt R."/>
            <person name="Pohl T.M."/>
            <person name="Eger P."/>
            <person name="Zimmermann W."/>
            <person name="Wedler H."/>
            <person name="Wambutt R."/>
            <person name="Purnelle B."/>
            <person name="Goffeau A."/>
            <person name="Cadieu E."/>
            <person name="Dreano S."/>
            <person name="Gloux S."/>
            <person name="Lelaure V."/>
            <person name="Mottier S."/>
            <person name="Galibert F."/>
            <person name="Aves S.J."/>
            <person name="Xiang Z."/>
            <person name="Hunt C."/>
            <person name="Moore K."/>
            <person name="Hurst S.M."/>
            <person name="Lucas M."/>
            <person name="Rochet M."/>
            <person name="Gaillardin C."/>
            <person name="Tallada V.A."/>
            <person name="Garzon A."/>
            <person name="Thode G."/>
            <person name="Daga R.R."/>
            <person name="Cruzado L."/>
            <person name="Jimenez J."/>
            <person name="Sanchez M."/>
            <person name="del Rey F."/>
            <person name="Benito J."/>
            <person name="Dominguez A."/>
            <person name="Revuelta J.L."/>
            <person name="Moreno S."/>
            <person name="Armstrong J."/>
            <person name="Forsburg S.L."/>
            <person name="Cerutti L."/>
            <person name="Lowe T."/>
            <person name="McCombie W.R."/>
            <person name="Paulsen I."/>
            <person name="Potashkin J."/>
            <person name="Shpakovski G.V."/>
            <person name="Ussery D."/>
            <person name="Barrell B.G."/>
            <person name="Nurse P."/>
        </authorList>
    </citation>
    <scope>NUCLEOTIDE SEQUENCE [LARGE SCALE GENOMIC DNA]</scope>
    <source>
        <strain>972 / ATCC 24843</strain>
    </source>
</reference>
<reference key="2">
    <citation type="journal article" date="2006" name="Nat. Biotechnol.">
        <title>ORFeome cloning and global analysis of protein localization in the fission yeast Schizosaccharomyces pombe.</title>
        <authorList>
            <person name="Matsuyama A."/>
            <person name="Arai R."/>
            <person name="Yashiroda Y."/>
            <person name="Shirai A."/>
            <person name="Kamata A."/>
            <person name="Sekido S."/>
            <person name="Kobayashi Y."/>
            <person name="Hashimoto A."/>
            <person name="Hamamoto M."/>
            <person name="Hiraoka Y."/>
            <person name="Horinouchi S."/>
            <person name="Yoshida M."/>
        </authorList>
    </citation>
    <scope>SUBCELLULAR LOCATION [LARGE SCALE ANALYSIS]</scope>
</reference>
<reference key="3">
    <citation type="journal article" date="2010" name="FEMS Yeast Res.">
        <title>An oleate-stimulated, phosphatidylinositol 4,5-bisphosphate-independent phospholipase D in Schizosaccharomyces pombe.</title>
        <authorList>
            <person name="Harkins A.L."/>
            <person name="Yuan G."/>
            <person name="London S.D."/>
            <person name="Dolan J.W."/>
        </authorList>
    </citation>
    <scope>CATALYTIC ACTIVITY</scope>
    <scope>ACTIVITY REGULATION</scope>
    <scope>FUNCTION</scope>
</reference>
<proteinExistence type="evidence at protein level"/>
<feature type="chain" id="PRO_0000218826" description="Phospholipase D1">
    <location>
        <begin position="1"/>
        <end position="1369"/>
    </location>
</feature>
<feature type="domain" description="PX">
    <location>
        <begin position="208"/>
        <end position="379"/>
    </location>
</feature>
<feature type="domain" description="PLD phosphodiesterase 1" evidence="1">
    <location>
        <begin position="641"/>
        <end position="668"/>
    </location>
</feature>
<feature type="domain" description="PLD phosphodiesterase 2" evidence="1">
    <location>
        <begin position="941"/>
        <end position="968"/>
    </location>
</feature>
<feature type="region of interest" description="Disordered" evidence="2">
    <location>
        <begin position="27"/>
        <end position="90"/>
    </location>
</feature>
<feature type="region of interest" description="Disordered" evidence="2">
    <location>
        <begin position="318"/>
        <end position="340"/>
    </location>
</feature>
<feature type="region of interest" description="Disordered" evidence="2">
    <location>
        <begin position="1277"/>
        <end position="1320"/>
    </location>
</feature>
<feature type="compositionally biased region" description="Basic and acidic residues" evidence="2">
    <location>
        <begin position="31"/>
        <end position="53"/>
    </location>
</feature>
<feature type="compositionally biased region" description="Basic and acidic residues" evidence="2">
    <location>
        <begin position="1277"/>
        <end position="1289"/>
    </location>
</feature>
<feature type="compositionally biased region" description="Polar residues" evidence="2">
    <location>
        <begin position="1292"/>
        <end position="1303"/>
    </location>
</feature>
<comment type="function">
    <text evidence="4">Required for meiosis and spore formation. Seems to be involved in the coordinate induction of late meiotic events.</text>
</comment>
<comment type="catalytic activity">
    <reaction evidence="4">
        <text>a 1,2-diacyl-sn-glycero-3-phosphocholine + H2O = a 1,2-diacyl-sn-glycero-3-phosphate + choline + H(+)</text>
        <dbReference type="Rhea" id="RHEA:14445"/>
        <dbReference type="ChEBI" id="CHEBI:15354"/>
        <dbReference type="ChEBI" id="CHEBI:15377"/>
        <dbReference type="ChEBI" id="CHEBI:15378"/>
        <dbReference type="ChEBI" id="CHEBI:57643"/>
        <dbReference type="ChEBI" id="CHEBI:58608"/>
        <dbReference type="EC" id="3.1.4.4"/>
    </reaction>
</comment>
<comment type="activity regulation">
    <text evidence="4">Activity is slightly stimulated by oleate.</text>
</comment>
<comment type="subcellular location">
    <subcellularLocation>
        <location evidence="3">Cytoplasm</location>
    </subcellularLocation>
</comment>
<comment type="similarity">
    <text evidence="5">Belongs to the phospholipase D family.</text>
</comment>
<accession>Q09706</accession>
<organism>
    <name type="scientific">Schizosaccharomyces pombe (strain 972 / ATCC 24843)</name>
    <name type="common">Fission yeast</name>
    <dbReference type="NCBI Taxonomy" id="284812"/>
    <lineage>
        <taxon>Eukaryota</taxon>
        <taxon>Fungi</taxon>
        <taxon>Dikarya</taxon>
        <taxon>Ascomycota</taxon>
        <taxon>Taphrinomycotina</taxon>
        <taxon>Schizosaccharomycetes</taxon>
        <taxon>Schizosaccharomycetales</taxon>
        <taxon>Schizosaccharomycetaceae</taxon>
        <taxon>Schizosaccharomyces</taxon>
    </lineage>
</organism>
<evidence type="ECO:0000255" key="1">
    <source>
        <dbReference type="PROSITE-ProRule" id="PRU00153"/>
    </source>
</evidence>
<evidence type="ECO:0000256" key="2">
    <source>
        <dbReference type="SAM" id="MobiDB-lite"/>
    </source>
</evidence>
<evidence type="ECO:0000269" key="3">
    <source>
    </source>
</evidence>
<evidence type="ECO:0000269" key="4">
    <source>
    </source>
</evidence>
<evidence type="ECO:0000305" key="5"/>
<keyword id="KW-0963">Cytoplasm</keyword>
<keyword id="KW-0378">Hydrolase</keyword>
<keyword id="KW-0442">Lipid degradation</keyword>
<keyword id="KW-0443">Lipid metabolism</keyword>
<keyword id="KW-0469">Meiosis</keyword>
<keyword id="KW-1185">Reference proteome</keyword>
<keyword id="KW-0677">Repeat</keyword>
<keyword id="KW-0749">Sporulation</keyword>
<dbReference type="EC" id="3.1.4.4"/>
<dbReference type="EMBL" id="CU329670">
    <property type="protein sequence ID" value="CAA90503.1"/>
    <property type="molecule type" value="Genomic_DNA"/>
</dbReference>
<dbReference type="PIR" id="T38564">
    <property type="entry name" value="S58160"/>
</dbReference>
<dbReference type="RefSeq" id="NP_592986.1">
    <property type="nucleotide sequence ID" value="NM_001018386.2"/>
</dbReference>
<dbReference type="SMR" id="Q09706"/>
<dbReference type="BioGRID" id="278542">
    <property type="interactions" value="1"/>
</dbReference>
<dbReference type="FunCoup" id="Q09706">
    <property type="interactions" value="607"/>
</dbReference>
<dbReference type="STRING" id="284812.Q09706"/>
<dbReference type="iPTMnet" id="Q09706"/>
<dbReference type="PaxDb" id="4896-SPAC2F7.16c.1"/>
<dbReference type="EnsemblFungi" id="SPAC2F7.16c.1">
    <property type="protein sequence ID" value="SPAC2F7.16c.1:pep"/>
    <property type="gene ID" value="SPAC2F7.16c"/>
</dbReference>
<dbReference type="GeneID" id="2542065"/>
<dbReference type="KEGG" id="spo:2542065"/>
<dbReference type="PomBase" id="SPAC2F7.16c">
    <property type="gene designation" value="pld1"/>
</dbReference>
<dbReference type="VEuPathDB" id="FungiDB:SPAC2F7.16c"/>
<dbReference type="eggNOG" id="KOG1329">
    <property type="taxonomic scope" value="Eukaryota"/>
</dbReference>
<dbReference type="HOGENOM" id="CLU_000690_3_2_1"/>
<dbReference type="InParanoid" id="Q09706"/>
<dbReference type="OMA" id="QMLQWIA"/>
<dbReference type="PhylomeDB" id="Q09706"/>
<dbReference type="Reactome" id="R-SPO-1483166">
    <property type="pathway name" value="Synthesis of PA"/>
</dbReference>
<dbReference type="Reactome" id="R-SPO-2029485">
    <property type="pathway name" value="Role of phospholipids in phagocytosis"/>
</dbReference>
<dbReference type="Reactome" id="R-SPO-6798695">
    <property type="pathway name" value="Neutrophil degranulation"/>
</dbReference>
<dbReference type="Reactome" id="R-SPO-8980692">
    <property type="pathway name" value="RHOA GTPase cycle"/>
</dbReference>
<dbReference type="PRO" id="PR:Q09706"/>
<dbReference type="Proteomes" id="UP000002485">
    <property type="component" value="Chromosome I"/>
</dbReference>
<dbReference type="GO" id="GO:0005829">
    <property type="term" value="C:cytosol"/>
    <property type="evidence" value="ECO:0007005"/>
    <property type="project" value="PomBase"/>
</dbReference>
<dbReference type="GO" id="GO:0032266">
    <property type="term" value="F:phosphatidylinositol-3-phosphate binding"/>
    <property type="evidence" value="ECO:0000266"/>
    <property type="project" value="PomBase"/>
</dbReference>
<dbReference type="GO" id="GO:0004630">
    <property type="term" value="F:phospholipase D activity"/>
    <property type="evidence" value="ECO:0000314"/>
    <property type="project" value="PomBase"/>
</dbReference>
<dbReference type="GO" id="GO:0051321">
    <property type="term" value="P:meiotic cell cycle"/>
    <property type="evidence" value="ECO:0007669"/>
    <property type="project" value="UniProtKB-KW"/>
</dbReference>
<dbReference type="GO" id="GO:0006654">
    <property type="term" value="P:phosphatidic acid biosynthetic process"/>
    <property type="evidence" value="ECO:0007669"/>
    <property type="project" value="InterPro"/>
</dbReference>
<dbReference type="GO" id="GO:0046488">
    <property type="term" value="P:phosphatidylinositol metabolic process"/>
    <property type="evidence" value="ECO:0000314"/>
    <property type="project" value="PomBase"/>
</dbReference>
<dbReference type="GO" id="GO:0048015">
    <property type="term" value="P:phosphatidylinositol-mediated signaling"/>
    <property type="evidence" value="ECO:0000305"/>
    <property type="project" value="PomBase"/>
</dbReference>
<dbReference type="GO" id="GO:0009395">
    <property type="term" value="P:phospholipid catabolic process"/>
    <property type="evidence" value="ECO:0000318"/>
    <property type="project" value="GO_Central"/>
</dbReference>
<dbReference type="GO" id="GO:0030435">
    <property type="term" value="P:sporulation resulting in formation of a cellular spore"/>
    <property type="evidence" value="ECO:0007669"/>
    <property type="project" value="UniProtKB-KW"/>
</dbReference>
<dbReference type="CDD" id="cd01254">
    <property type="entry name" value="PH_PLD"/>
    <property type="match status" value="1"/>
</dbReference>
<dbReference type="CDD" id="cd09138">
    <property type="entry name" value="PLDc_vPLD1_2_yPLD_like_1"/>
    <property type="match status" value="1"/>
</dbReference>
<dbReference type="CDD" id="cd09141">
    <property type="entry name" value="PLDc_vPLD1_2_yPLD_like_2"/>
    <property type="match status" value="1"/>
</dbReference>
<dbReference type="FunFam" id="3.30.870.10:FF:000011">
    <property type="entry name" value="Phospholipase"/>
    <property type="match status" value="1"/>
</dbReference>
<dbReference type="Gene3D" id="3.30.870.10">
    <property type="entry name" value="Endonuclease Chain A"/>
    <property type="match status" value="2"/>
</dbReference>
<dbReference type="InterPro" id="IPR001736">
    <property type="entry name" value="PLipase_D/transphosphatidylase"/>
</dbReference>
<dbReference type="InterPro" id="IPR016555">
    <property type="entry name" value="PLipase_D_euk"/>
</dbReference>
<dbReference type="InterPro" id="IPR015679">
    <property type="entry name" value="PLipase_D_fam"/>
</dbReference>
<dbReference type="InterPro" id="IPR001683">
    <property type="entry name" value="PX_dom"/>
</dbReference>
<dbReference type="PANTHER" id="PTHR18896:SF76">
    <property type="entry name" value="PHOSPHOLIPASE"/>
    <property type="match status" value="1"/>
</dbReference>
<dbReference type="PANTHER" id="PTHR18896">
    <property type="entry name" value="PHOSPHOLIPASE D"/>
    <property type="match status" value="1"/>
</dbReference>
<dbReference type="Pfam" id="PF00614">
    <property type="entry name" value="PLDc"/>
    <property type="match status" value="2"/>
</dbReference>
<dbReference type="PIRSF" id="PIRSF009376">
    <property type="entry name" value="Phospholipase_D_euk"/>
    <property type="match status" value="1"/>
</dbReference>
<dbReference type="SMART" id="SM00155">
    <property type="entry name" value="PLDc"/>
    <property type="match status" value="2"/>
</dbReference>
<dbReference type="SMART" id="SM00312">
    <property type="entry name" value="PX"/>
    <property type="match status" value="1"/>
</dbReference>
<dbReference type="SUPFAM" id="SSF56024">
    <property type="entry name" value="Phospholipase D/nuclease"/>
    <property type="match status" value="2"/>
</dbReference>
<dbReference type="PROSITE" id="PS50035">
    <property type="entry name" value="PLD"/>
    <property type="match status" value="2"/>
</dbReference>